<protein>
    <recommendedName>
        <fullName evidence="1">Histidine ammonia-lyase</fullName>
        <shortName evidence="1">Histidase</shortName>
        <ecNumber evidence="1">4.3.1.3</ecNumber>
    </recommendedName>
</protein>
<comment type="catalytic activity">
    <reaction evidence="1">
        <text>L-histidine = trans-urocanate + NH4(+)</text>
        <dbReference type="Rhea" id="RHEA:21232"/>
        <dbReference type="ChEBI" id="CHEBI:17771"/>
        <dbReference type="ChEBI" id="CHEBI:28938"/>
        <dbReference type="ChEBI" id="CHEBI:57595"/>
        <dbReference type="EC" id="4.3.1.3"/>
    </reaction>
</comment>
<comment type="pathway">
    <text evidence="1">Amino-acid degradation; L-histidine degradation into L-glutamate; N-formimidoyl-L-glutamate from L-histidine: step 1/3.</text>
</comment>
<comment type="subcellular location">
    <subcellularLocation>
        <location evidence="1">Cytoplasm</location>
    </subcellularLocation>
</comment>
<comment type="PTM">
    <text evidence="1">Contains an active site 4-methylidene-imidazol-5-one (MIO), which is formed autocatalytically by cyclization and dehydration of residues Ala-Ser-Gly.</text>
</comment>
<comment type="similarity">
    <text evidence="1">Belongs to the PAL/histidase family.</text>
</comment>
<organism>
    <name type="scientific">Geobacillus kaustophilus (strain HTA426)</name>
    <dbReference type="NCBI Taxonomy" id="235909"/>
    <lineage>
        <taxon>Bacteria</taxon>
        <taxon>Bacillati</taxon>
        <taxon>Bacillota</taxon>
        <taxon>Bacilli</taxon>
        <taxon>Bacillales</taxon>
        <taxon>Anoxybacillaceae</taxon>
        <taxon>Geobacillus</taxon>
        <taxon>Geobacillus thermoleovorans group</taxon>
    </lineage>
</organism>
<sequence>MIVLTGHTLTIDEVRRVVYERERVAADEESMRAVEKSRAAVEQAISNGRTIYGVNTGFGKLADVRIEGSDLEQLQINLLRSHACAVGEPFAEDVVRAMLLLRANALLKGYSGVRPAVIEQLLAFLNTGIHPIVPQQGSLGASGDLAPLAHLALAFAGEGEAMYQGRRMPAAQALSQAGISPLSLQEKEGLALINGTQVMTAVGALAYLEAEQLAYDSEWIAALTIEALYGIVDAFDARIHAARGFQEQVEVAERLRRYLAGSQLTTRQGERRVQDAYSIRCLPQVHGASLRALRYVKETLEIEMNAATDNPLIFADGTALSGGNFHGQPVAIAMDLLKIAVAELANISERRIERLVNPQLSEGLPPFLSPQPGLQSGAMIMQYVAASLVSENKTLAHPASVDSIPSSANQEDHVSMGTTAARHAYMIVQNARKVLAIELICALQAVEARGIERMAPSTRQFYHKARRIVSSITADRVFSDDIEAVAAWLSERANHHFLRDEAKA</sequence>
<proteinExistence type="inferred from homology"/>
<gene>
    <name evidence="1" type="primary">hutH</name>
    <name type="ordered locus">GK0385</name>
</gene>
<reference key="1">
    <citation type="journal article" date="2004" name="Nucleic Acids Res.">
        <title>Thermoadaptation trait revealed by the genome sequence of thermophilic Geobacillus kaustophilus.</title>
        <authorList>
            <person name="Takami H."/>
            <person name="Takaki Y."/>
            <person name="Chee G.-J."/>
            <person name="Nishi S."/>
            <person name="Shimamura S."/>
            <person name="Suzuki H."/>
            <person name="Matsui S."/>
            <person name="Uchiyama I."/>
        </authorList>
    </citation>
    <scope>NUCLEOTIDE SEQUENCE [LARGE SCALE GENOMIC DNA]</scope>
    <source>
        <strain>HTA426</strain>
    </source>
</reference>
<evidence type="ECO:0000255" key="1">
    <source>
        <dbReference type="HAMAP-Rule" id="MF_00229"/>
    </source>
</evidence>
<feature type="chain" id="PRO_0000161006" description="Histidine ammonia-lyase">
    <location>
        <begin position="1"/>
        <end position="504"/>
    </location>
</feature>
<feature type="modified residue" description="2,3-didehydroalanine (Ser)" evidence="1">
    <location>
        <position position="142"/>
    </location>
</feature>
<feature type="cross-link" description="5-imidazolinone (Ala-Gly)" evidence="1">
    <location>
        <begin position="141"/>
        <end position="143"/>
    </location>
</feature>
<name>HUTH_GEOKA</name>
<dbReference type="EC" id="4.3.1.3" evidence="1"/>
<dbReference type="EMBL" id="BA000043">
    <property type="protein sequence ID" value="BAD74670.1"/>
    <property type="molecule type" value="Genomic_DNA"/>
</dbReference>
<dbReference type="RefSeq" id="WP_011229889.1">
    <property type="nucleotide sequence ID" value="NC_006510.1"/>
</dbReference>
<dbReference type="SMR" id="Q5L310"/>
<dbReference type="STRING" id="235909.GK0385"/>
<dbReference type="GeneID" id="32062360"/>
<dbReference type="KEGG" id="gka:GK0385"/>
<dbReference type="eggNOG" id="COG2986">
    <property type="taxonomic scope" value="Bacteria"/>
</dbReference>
<dbReference type="HOGENOM" id="CLU_014801_4_0_9"/>
<dbReference type="UniPathway" id="UPA00379">
    <property type="reaction ID" value="UER00549"/>
</dbReference>
<dbReference type="Proteomes" id="UP000001172">
    <property type="component" value="Chromosome"/>
</dbReference>
<dbReference type="GO" id="GO:0005737">
    <property type="term" value="C:cytoplasm"/>
    <property type="evidence" value="ECO:0007669"/>
    <property type="project" value="UniProtKB-SubCell"/>
</dbReference>
<dbReference type="GO" id="GO:0004397">
    <property type="term" value="F:histidine ammonia-lyase activity"/>
    <property type="evidence" value="ECO:0007669"/>
    <property type="project" value="UniProtKB-UniRule"/>
</dbReference>
<dbReference type="GO" id="GO:0019556">
    <property type="term" value="P:L-histidine catabolic process to glutamate and formamide"/>
    <property type="evidence" value="ECO:0007669"/>
    <property type="project" value="UniProtKB-UniPathway"/>
</dbReference>
<dbReference type="GO" id="GO:0019557">
    <property type="term" value="P:L-histidine catabolic process to glutamate and formate"/>
    <property type="evidence" value="ECO:0007669"/>
    <property type="project" value="UniProtKB-UniPathway"/>
</dbReference>
<dbReference type="CDD" id="cd00332">
    <property type="entry name" value="PAL-HAL"/>
    <property type="match status" value="1"/>
</dbReference>
<dbReference type="FunFam" id="1.10.275.10:FF:000005">
    <property type="entry name" value="Histidine ammonia-lyase"/>
    <property type="match status" value="1"/>
</dbReference>
<dbReference type="FunFam" id="1.20.200.10:FF:000003">
    <property type="entry name" value="Histidine ammonia-lyase"/>
    <property type="match status" value="1"/>
</dbReference>
<dbReference type="Gene3D" id="1.20.200.10">
    <property type="entry name" value="Fumarase/aspartase (Central domain)"/>
    <property type="match status" value="1"/>
</dbReference>
<dbReference type="Gene3D" id="1.10.275.10">
    <property type="entry name" value="Fumarase/aspartase (N-terminal domain)"/>
    <property type="match status" value="1"/>
</dbReference>
<dbReference type="HAMAP" id="MF_00229">
    <property type="entry name" value="His_ammonia_lyase"/>
    <property type="match status" value="1"/>
</dbReference>
<dbReference type="InterPro" id="IPR001106">
    <property type="entry name" value="Aromatic_Lyase"/>
</dbReference>
<dbReference type="InterPro" id="IPR024083">
    <property type="entry name" value="Fumarase/histidase_N"/>
</dbReference>
<dbReference type="InterPro" id="IPR005921">
    <property type="entry name" value="HutH"/>
</dbReference>
<dbReference type="InterPro" id="IPR008948">
    <property type="entry name" value="L-Aspartase-like"/>
</dbReference>
<dbReference type="InterPro" id="IPR022313">
    <property type="entry name" value="Phe/His_NH3-lyase_AS"/>
</dbReference>
<dbReference type="NCBIfam" id="TIGR01225">
    <property type="entry name" value="hutH"/>
    <property type="match status" value="1"/>
</dbReference>
<dbReference type="NCBIfam" id="NF006871">
    <property type="entry name" value="PRK09367.1"/>
    <property type="match status" value="1"/>
</dbReference>
<dbReference type="PANTHER" id="PTHR10362">
    <property type="entry name" value="HISTIDINE AMMONIA-LYASE"/>
    <property type="match status" value="1"/>
</dbReference>
<dbReference type="Pfam" id="PF00221">
    <property type="entry name" value="Lyase_aromatic"/>
    <property type="match status" value="1"/>
</dbReference>
<dbReference type="SUPFAM" id="SSF48557">
    <property type="entry name" value="L-aspartase-like"/>
    <property type="match status" value="1"/>
</dbReference>
<dbReference type="PROSITE" id="PS00488">
    <property type="entry name" value="PAL_HISTIDASE"/>
    <property type="match status" value="1"/>
</dbReference>
<accession>Q5L310</accession>
<keyword id="KW-0963">Cytoplasm</keyword>
<keyword id="KW-0369">Histidine metabolism</keyword>
<keyword id="KW-0456">Lyase</keyword>
<keyword id="KW-1185">Reference proteome</keyword>